<reference key="1">
    <citation type="submission" date="1999-03" db="EMBL/GenBank/DDBJ databases">
        <title>The Mre11 homolog from Xenopus laevis.</title>
        <authorList>
            <person name="Bibikova M."/>
            <person name="Carroll D."/>
        </authorList>
    </citation>
    <scope>NUCLEOTIDE SEQUENCE [MRNA]</scope>
</reference>
<reference key="2">
    <citation type="submission" date="2005-12" db="EMBL/GenBank/DDBJ databases">
        <authorList>
            <consortium name="NIH - Xenopus Gene Collection (XGC) project"/>
        </authorList>
    </citation>
    <scope>NUCLEOTIDE SEQUENCE [LARGE SCALE MRNA]</scope>
    <source>
        <tissue>Testis</tissue>
    </source>
</reference>
<reference key="3">
    <citation type="journal article" date="2009" name="Mol. Biol. Cell">
        <title>The Mre11-Rad50-Nbs1 complex mediates activation of TopBP1 by ATM.</title>
        <authorList>
            <person name="Yoo H.Y."/>
            <person name="Kumagai A."/>
            <person name="Shevchenko A."/>
            <person name="Shevchenko A."/>
            <person name="Dunphy W.G."/>
        </authorList>
    </citation>
    <scope>FUNCTION</scope>
</reference>
<reference key="4">
    <citation type="journal article" date="2010" name="Nucleic Acids Res.">
        <title>The Mre11/Rad50/Nbs1 complex functions in resection-based DNA end joining in Xenopus laevis.</title>
        <authorList>
            <person name="Taylor E.M."/>
            <person name="Cecillon S.M."/>
            <person name="Bonis A."/>
            <person name="Chapman J.R."/>
            <person name="Povirk L.F."/>
            <person name="Lindsay H.D."/>
        </authorList>
    </citation>
    <scope>FUNCTION</scope>
</reference>
<reference key="5">
    <citation type="journal article" date="2013" name="Mol. Cell">
        <title>The MRN-CtIP pathway is required for metaphase chromosome alignment.</title>
        <authorList>
            <person name="Rozier L."/>
            <person name="Guo Y."/>
            <person name="Peterson S."/>
            <person name="Sato M."/>
            <person name="Baer R."/>
            <person name="Gautier J."/>
            <person name="Mao Y."/>
        </authorList>
    </citation>
    <scope>FUNCTION</scope>
    <scope>IDENTIFICATION IN THE MRN COMPLEX</scope>
</reference>
<reference key="6">
    <citation type="journal article" date="2013" name="Mol. Cell">
        <title>A role for the MRN complex in ATR activation via TOPBP1 recruitment.</title>
        <authorList>
            <person name="Duursma A.M."/>
            <person name="Driscoll R."/>
            <person name="Elias J.E."/>
            <person name="Cimprich K.A."/>
        </authorList>
    </citation>
    <scope>FUNCTION</scope>
    <scope>IDENTIFICATION IN THE MRN COMPLEX</scope>
</reference>
<dbReference type="EC" id="3.1.-.-" evidence="1"/>
<dbReference type="EMBL" id="AF134569">
    <property type="protein sequence ID" value="AAD31866.1"/>
    <property type="molecule type" value="mRNA"/>
</dbReference>
<dbReference type="EMBL" id="BC110736">
    <property type="protein sequence ID" value="AAI10737.1"/>
    <property type="molecule type" value="mRNA"/>
</dbReference>
<dbReference type="RefSeq" id="NP_001080975.1">
    <property type="nucleotide sequence ID" value="NM_001087506.1"/>
</dbReference>
<dbReference type="SMR" id="Q9W6K1"/>
<dbReference type="BioGRID" id="98910">
    <property type="interactions" value="1"/>
</dbReference>
<dbReference type="DNASU" id="394308"/>
<dbReference type="GeneID" id="394308"/>
<dbReference type="KEGG" id="xla:394308"/>
<dbReference type="AGR" id="Xenbase:XB-GENE-957959"/>
<dbReference type="CTD" id="394308"/>
<dbReference type="Xenbase" id="XB-GENE-957959">
    <property type="gene designation" value="mre11.L"/>
</dbReference>
<dbReference type="OrthoDB" id="30417at2759"/>
<dbReference type="Proteomes" id="UP000186698">
    <property type="component" value="Chromosome 2L"/>
</dbReference>
<dbReference type="Bgee" id="394308">
    <property type="expression patterns" value="Expressed in testis and 19 other cell types or tissues"/>
</dbReference>
<dbReference type="GO" id="GO:0000781">
    <property type="term" value="C:chromosome, telomeric region"/>
    <property type="evidence" value="ECO:0007669"/>
    <property type="project" value="UniProtKB-SubCell"/>
</dbReference>
<dbReference type="GO" id="GO:0030870">
    <property type="term" value="C:Mre11 complex"/>
    <property type="evidence" value="ECO:0000314"/>
    <property type="project" value="UniProtKB"/>
</dbReference>
<dbReference type="GO" id="GO:0005657">
    <property type="term" value="C:replication fork"/>
    <property type="evidence" value="ECO:0000250"/>
    <property type="project" value="UniProtKB"/>
</dbReference>
<dbReference type="GO" id="GO:0035861">
    <property type="term" value="C:site of double-strand break"/>
    <property type="evidence" value="ECO:0000250"/>
    <property type="project" value="UniProtKB"/>
</dbReference>
<dbReference type="GO" id="GO:0008408">
    <property type="term" value="F:3'-5' exonuclease activity"/>
    <property type="evidence" value="ECO:0000250"/>
    <property type="project" value="UniProtKB"/>
</dbReference>
<dbReference type="GO" id="GO:0008296">
    <property type="term" value="F:3'-5'-DNA exonuclease activity"/>
    <property type="evidence" value="ECO:0007669"/>
    <property type="project" value="InterPro"/>
</dbReference>
<dbReference type="GO" id="GO:0004520">
    <property type="term" value="F:DNA endonuclease activity"/>
    <property type="evidence" value="ECO:0000250"/>
    <property type="project" value="UniProtKB"/>
</dbReference>
<dbReference type="GO" id="GO:0030145">
    <property type="term" value="F:manganese ion binding"/>
    <property type="evidence" value="ECO:0007669"/>
    <property type="project" value="InterPro"/>
</dbReference>
<dbReference type="GO" id="GO:0000014">
    <property type="term" value="F:single-stranded DNA endodeoxyribonuclease activity"/>
    <property type="evidence" value="ECO:0000318"/>
    <property type="project" value="GO_Central"/>
</dbReference>
<dbReference type="GO" id="GO:0006974">
    <property type="term" value="P:DNA damage response"/>
    <property type="evidence" value="ECO:0000250"/>
    <property type="project" value="UniProtKB"/>
</dbReference>
<dbReference type="GO" id="GO:0110025">
    <property type="term" value="P:DNA strand resection involved in replication fork processing"/>
    <property type="evidence" value="ECO:0000314"/>
    <property type="project" value="UniProtKB"/>
</dbReference>
<dbReference type="GO" id="GO:0000724">
    <property type="term" value="P:double-strand break repair via homologous recombination"/>
    <property type="evidence" value="ECO:0000250"/>
    <property type="project" value="UniProtKB"/>
</dbReference>
<dbReference type="GO" id="GO:0006303">
    <property type="term" value="P:double-strand break repair via nonhomologous end joining"/>
    <property type="evidence" value="ECO:0000250"/>
    <property type="project" value="UniProtKB"/>
</dbReference>
<dbReference type="GO" id="GO:0042138">
    <property type="term" value="P:meiotic DNA double-strand break formation"/>
    <property type="evidence" value="ECO:0000318"/>
    <property type="project" value="GO_Central"/>
</dbReference>
<dbReference type="GO" id="GO:0051310">
    <property type="term" value="P:metaphase chromosome alignment"/>
    <property type="evidence" value="ECO:0000314"/>
    <property type="project" value="UniProtKB"/>
</dbReference>
<dbReference type="GO" id="GO:0097552">
    <property type="term" value="P:mitochondrial double-strand break repair via homologous recombination"/>
    <property type="evidence" value="ECO:0000318"/>
    <property type="project" value="GO_Central"/>
</dbReference>
<dbReference type="GO" id="GO:0007095">
    <property type="term" value="P:mitotic G2 DNA damage checkpoint signaling"/>
    <property type="evidence" value="ECO:0000318"/>
    <property type="project" value="GO_Central"/>
</dbReference>
<dbReference type="GO" id="GO:0031573">
    <property type="term" value="P:mitotic intra-S DNA damage checkpoint signaling"/>
    <property type="evidence" value="ECO:0000318"/>
    <property type="project" value="GO_Central"/>
</dbReference>
<dbReference type="GO" id="GO:2001033">
    <property type="term" value="P:negative regulation of double-strand break repair via nonhomologous end joining"/>
    <property type="evidence" value="ECO:0000250"/>
    <property type="project" value="UniProtKB"/>
</dbReference>
<dbReference type="GO" id="GO:0062176">
    <property type="term" value="P:R-loop processing"/>
    <property type="evidence" value="ECO:0000250"/>
    <property type="project" value="UniProtKB"/>
</dbReference>
<dbReference type="GO" id="GO:0000723">
    <property type="term" value="P:telomere maintenance"/>
    <property type="evidence" value="ECO:0000318"/>
    <property type="project" value="GO_Central"/>
</dbReference>
<dbReference type="CDD" id="cd00840">
    <property type="entry name" value="MPP_Mre11_N"/>
    <property type="match status" value="1"/>
</dbReference>
<dbReference type="FunFam" id="3.30.110.110:FF:000001">
    <property type="entry name" value="Double-strand break repair protein"/>
    <property type="match status" value="1"/>
</dbReference>
<dbReference type="FunFam" id="3.60.21.10:FF:000011">
    <property type="entry name" value="Double-strand break repair protein"/>
    <property type="match status" value="1"/>
</dbReference>
<dbReference type="Gene3D" id="3.60.21.10">
    <property type="match status" value="1"/>
</dbReference>
<dbReference type="Gene3D" id="3.30.110.110">
    <property type="entry name" value="Mre11, capping domain"/>
    <property type="match status" value="1"/>
</dbReference>
<dbReference type="InterPro" id="IPR004843">
    <property type="entry name" value="Calcineurin-like_PHP_ApaH"/>
</dbReference>
<dbReference type="InterPro" id="IPR029052">
    <property type="entry name" value="Metallo-depent_PP-like"/>
</dbReference>
<dbReference type="InterPro" id="IPR003701">
    <property type="entry name" value="Mre11"/>
</dbReference>
<dbReference type="InterPro" id="IPR038487">
    <property type="entry name" value="Mre11_capping_dom"/>
</dbReference>
<dbReference type="InterPro" id="IPR007281">
    <property type="entry name" value="Mre11_DNA-bd"/>
</dbReference>
<dbReference type="InterPro" id="IPR041796">
    <property type="entry name" value="Mre11_N"/>
</dbReference>
<dbReference type="NCBIfam" id="TIGR00583">
    <property type="entry name" value="mre11"/>
    <property type="match status" value="1"/>
</dbReference>
<dbReference type="PANTHER" id="PTHR10139">
    <property type="entry name" value="DOUBLE-STRAND BREAK REPAIR PROTEIN MRE11"/>
    <property type="match status" value="1"/>
</dbReference>
<dbReference type="PANTHER" id="PTHR10139:SF1">
    <property type="entry name" value="DOUBLE-STRAND BREAK REPAIR PROTEIN MRE11"/>
    <property type="match status" value="1"/>
</dbReference>
<dbReference type="Pfam" id="PF00149">
    <property type="entry name" value="Metallophos"/>
    <property type="match status" value="1"/>
</dbReference>
<dbReference type="Pfam" id="PF04152">
    <property type="entry name" value="Mre11_DNA_bind"/>
    <property type="match status" value="1"/>
</dbReference>
<dbReference type="PIRSF" id="PIRSF000882">
    <property type="entry name" value="DSB_repair_MRE11"/>
    <property type="match status" value="1"/>
</dbReference>
<dbReference type="SMART" id="SM01347">
    <property type="entry name" value="Mre11_DNA_bind"/>
    <property type="match status" value="1"/>
</dbReference>
<dbReference type="SUPFAM" id="SSF56300">
    <property type="entry name" value="Metallo-dependent phosphatases"/>
    <property type="match status" value="1"/>
</dbReference>
<organism>
    <name type="scientific">Xenopus laevis</name>
    <name type="common">African clawed frog</name>
    <dbReference type="NCBI Taxonomy" id="8355"/>
    <lineage>
        <taxon>Eukaryota</taxon>
        <taxon>Metazoa</taxon>
        <taxon>Chordata</taxon>
        <taxon>Craniata</taxon>
        <taxon>Vertebrata</taxon>
        <taxon>Euteleostomi</taxon>
        <taxon>Amphibia</taxon>
        <taxon>Batrachia</taxon>
        <taxon>Anura</taxon>
        <taxon>Pipoidea</taxon>
        <taxon>Pipidae</taxon>
        <taxon>Xenopodinae</taxon>
        <taxon>Xenopus</taxon>
        <taxon>Xenopus</taxon>
    </lineage>
</organism>
<name>MRE11_XENLA</name>
<gene>
    <name type="primary">mre11</name>
</gene>
<accession>Q9W6K1</accession>
<accession>Q2TAT5</accession>
<sequence>MSSSSSSLDDEDTFKILVATDIHLGFMEKDAVRGNDSFVAFDEILRLAQDNEVDFLLLGGDLFHDNKPSRRTLHICLEQLRKYCMGDRPIEFEVLSDQSVNFGYSKFPWVNYQDNNLNISLPVFSVHGNHDDPTGADALCALDILSSAGLVNHFGRATSVEKIDISPVLLQKGHSKIALYGLGSIPDERLYRMFVNKQVMMLRPREDESSWFNLFVIHQNRSKHGPTNYIPEQFLDEFLDLVIWGHEHECKIAPTRNEQQLFYVSQPGSSVATSLSPGEAEKKHVGLLRIKGKKMNMQKIPLQTVRQFFIEDLVLSDYPDIFNPDNPRVTQEIETFCIEKVEAMLDTAERERLGNPRQPDKPLIRLRVDYTGGFEPFNTLRFSQKFVDRTANPKDIIHFFRHKEQKDKKDSITINFGKIDSKPLLEGTTLRVEDLVKEYFKTAEKNVQLSLLTERGMGEAVQEFVDKEEKDALEELVKFQLEKTQRFLKERHIDAEEEKIDEEVRKFRETRKTNTNEEDEEVREAIQRARTHRSQAPDVEMSDEDDDALLRKVSLSDDEDVRASMPARGRGRGRARGGRGQSTTTRGTSRRGRGSASADQPSSGRATKATGKNMSILDAFKPSSRQPTARNVAKKTYSEDIEDDDSDLEEVSFTPSSVIESRRTSSTSTSYSRKSTQPQSQATKAHFFDDDDDEEDFDPFKKSGPSRRGRR</sequence>
<comment type="function">
    <text evidence="1 4 5 6 7">Core component of the MRN complex, which plays a central role in double-strand break (DSB) repair, DNA recombination, maintenance of telomere integrity and meiosis (PubMed:19892829, PubMed:23434370). The MRN complex is involved in the repair of DNA double-strand breaks (DSBs) via homologous recombination (HR), an error-free mechanism which primarily occurs during S and G2 phases (PubMed:19892829). The complex (1) mediates the end resection of damaged DNA, which generates proper single-stranded DNA, a key initial steps in HR, and is (2) required for the recruitment of other repair factors and efficient activation of ATM and ATR upon DNA damage (By similarity). Within the MRN complex, mre11 possesses both single-strand endonuclease activity and double-strand-specific 3'-5' exonuclease activity (By similarity). After DSBs, mre11 is loaded onto DSBs sites and cleaves DNA by cooperating with rbbp8/CtIP to initiate end resection (By similarity). Mre11 first endonucleolytically cleaves the 5' strand at DNA DSB ends to prevent non-homologous end joining (NHEJ) and licence HR (By similarity). It then generates a single-stranded DNA gap via 3' to 5' exonucleolytic degradation to create entry sites for exo1- and dna2-mediated 5' to 3' long-range resection, which is required for single-strand invasion and recombination (By similarity). Rbbp8/CtIP specifically promotes the endonuclease activity of mre11 to clear protein-DNA adducts and generate clean double-strand break ends (By similarity). The MRN complex is also required for DNA damage signaling via activation of the atm and atr kinases: the nuclease activity of mre11 is not required to activate ATM and ATR (By similarity). The MRN complex promotes recruitment of topbp1 to DNA damage sites (PubMed:19279141, PubMed:23582259). The MRN complex and rbbp8/CtIP are also required for chromosome alignment during metaphase (PubMed:23434370).</text>
</comment>
<comment type="cofactor">
    <cofactor evidence="1">
        <name>Mn(2+)</name>
        <dbReference type="ChEBI" id="CHEBI:29035"/>
    </cofactor>
</comment>
<comment type="subunit">
    <text evidence="4 6">Component of the MRN complex composed of two heterodimers rad50 and mre11 associated with a single nbn.</text>
</comment>
<comment type="subcellular location">
    <subcellularLocation>
        <location evidence="1">Nucleus</location>
    </subcellularLocation>
    <subcellularLocation>
        <location evidence="1">Chromosome</location>
    </subcellularLocation>
    <subcellularLocation>
        <location evidence="1">Chromosome</location>
        <location evidence="1">Telomere</location>
    </subcellularLocation>
    <text evidence="1">Localizes to DNA double-strand breaks (DSBs).</text>
</comment>
<comment type="similarity">
    <text evidence="8">Belongs to the MRE11/RAD32 family.</text>
</comment>
<evidence type="ECO:0000250" key="1">
    <source>
        <dbReference type="UniProtKB" id="P49959"/>
    </source>
</evidence>
<evidence type="ECO:0000250" key="2">
    <source>
        <dbReference type="UniProtKB" id="Q61216"/>
    </source>
</evidence>
<evidence type="ECO:0000256" key="3">
    <source>
        <dbReference type="SAM" id="MobiDB-lite"/>
    </source>
</evidence>
<evidence type="ECO:0000269" key="4">
    <source>
    </source>
</evidence>
<evidence type="ECO:0000269" key="5">
    <source>
    </source>
</evidence>
<evidence type="ECO:0000269" key="6">
    <source>
    </source>
</evidence>
<evidence type="ECO:0000269" key="7">
    <source>
    </source>
</evidence>
<evidence type="ECO:0000305" key="8"/>
<proteinExistence type="evidence at protein level"/>
<feature type="chain" id="PRO_0000138677" description="Double-strand break repair protein MRE11">
    <location>
        <begin position="1"/>
        <end position="711"/>
    </location>
</feature>
<feature type="region of interest" description="Disordered" evidence="3">
    <location>
        <begin position="510"/>
        <end position="711"/>
    </location>
</feature>
<feature type="short sequence motif" description="GAR" evidence="1">
    <location>
        <begin position="570"/>
        <end position="593"/>
    </location>
</feature>
<feature type="compositionally biased region" description="Polar residues" evidence="3">
    <location>
        <begin position="599"/>
        <end position="613"/>
    </location>
</feature>
<feature type="compositionally biased region" description="Acidic residues" evidence="3">
    <location>
        <begin position="639"/>
        <end position="650"/>
    </location>
</feature>
<feature type="compositionally biased region" description="Low complexity" evidence="3">
    <location>
        <begin position="656"/>
        <end position="676"/>
    </location>
</feature>
<feature type="active site" description="Proton donor" evidence="2">
    <location>
        <position position="130"/>
    </location>
</feature>
<feature type="binding site" evidence="1">
    <location>
        <position position="21"/>
    </location>
    <ligand>
        <name>Mn(2+)</name>
        <dbReference type="ChEBI" id="CHEBI:29035"/>
        <label>1</label>
    </ligand>
</feature>
<feature type="binding site" evidence="1">
    <location>
        <position position="23"/>
    </location>
    <ligand>
        <name>Mn(2+)</name>
        <dbReference type="ChEBI" id="CHEBI:29035"/>
        <label>1</label>
    </ligand>
</feature>
<feature type="binding site" evidence="1">
    <location>
        <position position="61"/>
    </location>
    <ligand>
        <name>Mn(2+)</name>
        <dbReference type="ChEBI" id="CHEBI:29035"/>
        <label>1</label>
    </ligand>
</feature>
<feature type="binding site" evidence="1">
    <location>
        <position position="61"/>
    </location>
    <ligand>
        <name>Mn(2+)</name>
        <dbReference type="ChEBI" id="CHEBI:29035"/>
        <label>2</label>
    </ligand>
</feature>
<feature type="binding site" evidence="1">
    <location>
        <position position="129"/>
    </location>
    <ligand>
        <name>Mn(2+)</name>
        <dbReference type="ChEBI" id="CHEBI:29035"/>
        <label>2</label>
    </ligand>
</feature>
<feature type="binding site" evidence="1">
    <location>
        <position position="218"/>
    </location>
    <ligand>
        <name>Mn(2+)</name>
        <dbReference type="ChEBI" id="CHEBI:29035"/>
        <label>2</label>
    </ligand>
</feature>
<feature type="binding site" evidence="1">
    <location>
        <position position="246"/>
    </location>
    <ligand>
        <name>Mn(2+)</name>
        <dbReference type="ChEBI" id="CHEBI:29035"/>
        <label>2</label>
    </ligand>
</feature>
<feature type="binding site" evidence="1">
    <location>
        <position position="248"/>
    </location>
    <ligand>
        <name>Mn(2+)</name>
        <dbReference type="ChEBI" id="CHEBI:29035"/>
        <label>1</label>
    </ligand>
</feature>
<keyword id="KW-0158">Chromosome</keyword>
<keyword id="KW-0227">DNA damage</keyword>
<keyword id="KW-0234">DNA repair</keyword>
<keyword id="KW-0255">Endonuclease</keyword>
<keyword id="KW-0269">Exonuclease</keyword>
<keyword id="KW-0378">Hydrolase</keyword>
<keyword id="KW-0464">Manganese</keyword>
<keyword id="KW-0469">Meiosis</keyword>
<keyword id="KW-0479">Metal-binding</keyword>
<keyword id="KW-0540">Nuclease</keyword>
<keyword id="KW-0539">Nucleus</keyword>
<keyword id="KW-1185">Reference proteome</keyword>
<keyword id="KW-0779">Telomere</keyword>
<protein>
    <recommendedName>
        <fullName>Double-strand break repair protein MRE11</fullName>
        <ecNumber evidence="1">3.1.-.-</ecNumber>
    </recommendedName>
</protein>